<protein>
    <recommendedName>
        <fullName evidence="1">Small ribosomal subunit protein uS13</fullName>
    </recommendedName>
    <alternativeName>
        <fullName evidence="3">30S ribosomal protein S13</fullName>
    </alternativeName>
</protein>
<name>RS13_THEM4</name>
<evidence type="ECO:0000255" key="1">
    <source>
        <dbReference type="HAMAP-Rule" id="MF_01315"/>
    </source>
</evidence>
<evidence type="ECO:0000256" key="2">
    <source>
        <dbReference type="SAM" id="MobiDB-lite"/>
    </source>
</evidence>
<evidence type="ECO:0000305" key="3"/>
<comment type="function">
    <text evidence="1">Located at the top of the head of the 30S subunit, it contacts several helices of the 16S rRNA. In the 70S ribosome it contacts the 23S rRNA (bridge B1a) and protein L5 of the 50S subunit (bridge B1b), connecting the 2 subunits; these bridges are implicated in subunit movement. Contacts the tRNAs in the A and P-sites.</text>
</comment>
<comment type="subunit">
    <text evidence="1">Part of the 30S ribosomal subunit. Forms a loose heterodimer with protein S19. Forms two bridges to the 50S subunit in the 70S ribosome.</text>
</comment>
<comment type="similarity">
    <text evidence="1">Belongs to the universal ribosomal protein uS13 family.</text>
</comment>
<accession>A6LLN8</accession>
<proteinExistence type="inferred from homology"/>
<reference key="1">
    <citation type="submission" date="2007-05" db="EMBL/GenBank/DDBJ databases">
        <title>Complete sequence of Thermosipho melanesiensis BI429.</title>
        <authorList>
            <consortium name="US DOE Joint Genome Institute"/>
            <person name="Copeland A."/>
            <person name="Lucas S."/>
            <person name="Lapidus A."/>
            <person name="Barry K."/>
            <person name="Glavina del Rio T."/>
            <person name="Dalin E."/>
            <person name="Tice H."/>
            <person name="Pitluck S."/>
            <person name="Chertkov O."/>
            <person name="Brettin T."/>
            <person name="Bruce D."/>
            <person name="Detter J.C."/>
            <person name="Han C."/>
            <person name="Schmutz J."/>
            <person name="Larimer F."/>
            <person name="Land M."/>
            <person name="Hauser L."/>
            <person name="Kyrpides N."/>
            <person name="Mikhailova N."/>
            <person name="Nelson K."/>
            <person name="Gogarten J.P."/>
            <person name="Noll K."/>
            <person name="Richardson P."/>
        </authorList>
    </citation>
    <scope>NUCLEOTIDE SEQUENCE [LARGE SCALE GENOMIC DNA]</scope>
    <source>
        <strain>DSM 12029 / CIP 104789 / BI429</strain>
    </source>
</reference>
<organism>
    <name type="scientific">Thermosipho melanesiensis (strain DSM 12029 / CIP 104789 / BI429)</name>
    <dbReference type="NCBI Taxonomy" id="391009"/>
    <lineage>
        <taxon>Bacteria</taxon>
        <taxon>Thermotogati</taxon>
        <taxon>Thermotogota</taxon>
        <taxon>Thermotogae</taxon>
        <taxon>Thermotogales</taxon>
        <taxon>Fervidobacteriaceae</taxon>
        <taxon>Thermosipho</taxon>
    </lineage>
</organism>
<keyword id="KW-0687">Ribonucleoprotein</keyword>
<keyword id="KW-0689">Ribosomal protein</keyword>
<keyword id="KW-0694">RNA-binding</keyword>
<keyword id="KW-0699">rRNA-binding</keyword>
<keyword id="KW-0820">tRNA-binding</keyword>
<dbReference type="EMBL" id="CP000716">
    <property type="protein sequence ID" value="ABR30839.1"/>
    <property type="molecule type" value="Genomic_DNA"/>
</dbReference>
<dbReference type="RefSeq" id="WP_012057199.1">
    <property type="nucleotide sequence ID" value="NC_009616.1"/>
</dbReference>
<dbReference type="SMR" id="A6LLN8"/>
<dbReference type="STRING" id="391009.Tmel_0978"/>
<dbReference type="KEGG" id="tme:Tmel_0978"/>
<dbReference type="eggNOG" id="COG0099">
    <property type="taxonomic scope" value="Bacteria"/>
</dbReference>
<dbReference type="HOGENOM" id="CLU_103849_1_2_0"/>
<dbReference type="OrthoDB" id="9803610at2"/>
<dbReference type="Proteomes" id="UP000001110">
    <property type="component" value="Chromosome"/>
</dbReference>
<dbReference type="GO" id="GO:0005829">
    <property type="term" value="C:cytosol"/>
    <property type="evidence" value="ECO:0007669"/>
    <property type="project" value="TreeGrafter"/>
</dbReference>
<dbReference type="GO" id="GO:0015935">
    <property type="term" value="C:small ribosomal subunit"/>
    <property type="evidence" value="ECO:0007669"/>
    <property type="project" value="TreeGrafter"/>
</dbReference>
<dbReference type="GO" id="GO:0019843">
    <property type="term" value="F:rRNA binding"/>
    <property type="evidence" value="ECO:0007669"/>
    <property type="project" value="UniProtKB-UniRule"/>
</dbReference>
<dbReference type="GO" id="GO:0003735">
    <property type="term" value="F:structural constituent of ribosome"/>
    <property type="evidence" value="ECO:0007669"/>
    <property type="project" value="InterPro"/>
</dbReference>
<dbReference type="GO" id="GO:0000049">
    <property type="term" value="F:tRNA binding"/>
    <property type="evidence" value="ECO:0007669"/>
    <property type="project" value="UniProtKB-UniRule"/>
</dbReference>
<dbReference type="GO" id="GO:0006412">
    <property type="term" value="P:translation"/>
    <property type="evidence" value="ECO:0007669"/>
    <property type="project" value="UniProtKB-UniRule"/>
</dbReference>
<dbReference type="FunFam" id="1.10.8.50:FF:000001">
    <property type="entry name" value="30S ribosomal protein S13"/>
    <property type="match status" value="1"/>
</dbReference>
<dbReference type="FunFam" id="4.10.910.10:FF:000001">
    <property type="entry name" value="30S ribosomal protein S13"/>
    <property type="match status" value="1"/>
</dbReference>
<dbReference type="Gene3D" id="1.10.8.50">
    <property type="match status" value="1"/>
</dbReference>
<dbReference type="Gene3D" id="4.10.910.10">
    <property type="entry name" value="30s ribosomal protein s13, domain 2"/>
    <property type="match status" value="1"/>
</dbReference>
<dbReference type="HAMAP" id="MF_01315">
    <property type="entry name" value="Ribosomal_uS13"/>
    <property type="match status" value="1"/>
</dbReference>
<dbReference type="InterPro" id="IPR027437">
    <property type="entry name" value="Rbsml_uS13_C"/>
</dbReference>
<dbReference type="InterPro" id="IPR001892">
    <property type="entry name" value="Ribosomal_uS13"/>
</dbReference>
<dbReference type="InterPro" id="IPR010979">
    <property type="entry name" value="Ribosomal_uS13-like_H2TH"/>
</dbReference>
<dbReference type="InterPro" id="IPR019980">
    <property type="entry name" value="Ribosomal_uS13_bac-type"/>
</dbReference>
<dbReference type="InterPro" id="IPR018269">
    <property type="entry name" value="Ribosomal_uS13_CS"/>
</dbReference>
<dbReference type="NCBIfam" id="TIGR03631">
    <property type="entry name" value="uS13_bact"/>
    <property type="match status" value="1"/>
</dbReference>
<dbReference type="PANTHER" id="PTHR10871">
    <property type="entry name" value="30S RIBOSOMAL PROTEIN S13/40S RIBOSOMAL PROTEIN S18"/>
    <property type="match status" value="1"/>
</dbReference>
<dbReference type="PANTHER" id="PTHR10871:SF1">
    <property type="entry name" value="SMALL RIBOSOMAL SUBUNIT PROTEIN US13M"/>
    <property type="match status" value="1"/>
</dbReference>
<dbReference type="Pfam" id="PF00416">
    <property type="entry name" value="Ribosomal_S13"/>
    <property type="match status" value="1"/>
</dbReference>
<dbReference type="PIRSF" id="PIRSF002134">
    <property type="entry name" value="Ribosomal_S13"/>
    <property type="match status" value="1"/>
</dbReference>
<dbReference type="SUPFAM" id="SSF46946">
    <property type="entry name" value="S13-like H2TH domain"/>
    <property type="match status" value="1"/>
</dbReference>
<dbReference type="PROSITE" id="PS00646">
    <property type="entry name" value="RIBOSOMAL_S13_1"/>
    <property type="match status" value="1"/>
</dbReference>
<dbReference type="PROSITE" id="PS50159">
    <property type="entry name" value="RIBOSOMAL_S13_2"/>
    <property type="match status" value="1"/>
</dbReference>
<sequence length="122" mass="13974">MARIVGVEIPNDKKVEIALTYIYGIGKTRAKQICEATNIDPNKRVRELGDEEISKIATFIQQNYKVEGELRTEVMQNIKRLIDIGCYRGLRHKLGLPVRGQKTKSNARTRKGPRPSRIKKKK</sequence>
<feature type="chain" id="PRO_1000051896" description="Small ribosomal subunit protein uS13">
    <location>
        <begin position="1"/>
        <end position="122"/>
    </location>
</feature>
<feature type="region of interest" description="Disordered" evidence="2">
    <location>
        <begin position="97"/>
        <end position="122"/>
    </location>
</feature>
<feature type="compositionally biased region" description="Basic residues" evidence="2">
    <location>
        <begin position="101"/>
        <end position="122"/>
    </location>
</feature>
<gene>
    <name evidence="1" type="primary">rpsM</name>
    <name type="ordered locus">Tmel_0978</name>
</gene>